<feature type="chain" id="PRO_0000295263" description="KxDL motif-containing protein 1">
    <location>
        <begin position="1"/>
        <end position="180"/>
    </location>
</feature>
<feature type="region of interest" description="Disordered" evidence="3">
    <location>
        <begin position="130"/>
        <end position="180"/>
    </location>
</feature>
<feature type="compositionally biased region" description="Polar residues" evidence="3">
    <location>
        <begin position="130"/>
        <end position="144"/>
    </location>
</feature>
<feature type="compositionally biased region" description="Polar residues" evidence="3">
    <location>
        <begin position="158"/>
        <end position="170"/>
    </location>
</feature>
<proteinExistence type="evidence at transcript level"/>
<reference key="1">
    <citation type="submission" date="2004-07" db="EMBL/GenBank/DDBJ databases">
        <authorList>
            <consortium name="NIH - Xenopus Gene Collection (XGC) project"/>
        </authorList>
    </citation>
    <scope>NUCLEOTIDE SEQUENCE [LARGE SCALE MRNA]</scope>
    <source>
        <tissue>Kidney</tissue>
    </source>
</reference>
<comment type="function">
    <text evidence="1 2">As part of a BORC-like complex may play a role in lysosomes movement and localization at the cell periphery. Associated with the cytosolic face of lysosomes, this complex may couple lysosomes to microtubule plus-end-directed kinesin motor. May also be involved in the biogenesis of lysosome-related organelles such as melanosomes.</text>
</comment>
<comment type="subunit">
    <text evidence="1">Associates with the BLOC-1 complex.</text>
</comment>
<comment type="subcellular location">
    <subcellularLocation>
        <location evidence="2">Lysosome membrane</location>
    </subcellularLocation>
</comment>
<comment type="similarity">
    <text evidence="4">Belongs to the KXD1 family.</text>
</comment>
<comment type="sequence caution" evidence="4">
    <conflict type="erroneous initiation">
        <sequence resource="EMBL-CDS" id="AAH77438"/>
    </conflict>
    <text>Extended N-terminus.</text>
</comment>
<name>KXDL1_XENLA</name>
<dbReference type="EMBL" id="BC077438">
    <property type="protein sequence ID" value="AAH77438.1"/>
    <property type="status" value="ALT_INIT"/>
    <property type="molecule type" value="mRNA"/>
</dbReference>
<dbReference type="RefSeq" id="NP_001086784.1">
    <property type="nucleotide sequence ID" value="NM_001093315.1"/>
</dbReference>
<dbReference type="SMR" id="Q6DDT0"/>
<dbReference type="DNASU" id="446619"/>
<dbReference type="GeneID" id="446619"/>
<dbReference type="KEGG" id="xla:446619"/>
<dbReference type="AGR" id="Xenbase:XB-GENE-5898631"/>
<dbReference type="CTD" id="446619"/>
<dbReference type="Xenbase" id="XB-GENE-5898631">
    <property type="gene designation" value="kxd1.L"/>
</dbReference>
<dbReference type="OrthoDB" id="10258877at2759"/>
<dbReference type="Proteomes" id="UP000186698">
    <property type="component" value="Chromosome 1L"/>
</dbReference>
<dbReference type="Bgee" id="446619">
    <property type="expression patterns" value="Expressed in oocyte and 19 other cell types or tissues"/>
</dbReference>
<dbReference type="GO" id="GO:0099078">
    <property type="term" value="C:BORC complex"/>
    <property type="evidence" value="ECO:0000250"/>
    <property type="project" value="UniProtKB"/>
</dbReference>
<dbReference type="GO" id="GO:0005765">
    <property type="term" value="C:lysosomal membrane"/>
    <property type="evidence" value="ECO:0007669"/>
    <property type="project" value="UniProtKB-SubCell"/>
</dbReference>
<dbReference type="GO" id="GO:0032418">
    <property type="term" value="P:lysosome localization"/>
    <property type="evidence" value="ECO:0000250"/>
    <property type="project" value="UniProtKB"/>
</dbReference>
<dbReference type="GO" id="GO:0016192">
    <property type="term" value="P:vesicle-mediated transport"/>
    <property type="evidence" value="ECO:0000250"/>
    <property type="project" value="UniProtKB"/>
</dbReference>
<dbReference type="InterPro" id="IPR039843">
    <property type="entry name" value="KXD1-like"/>
</dbReference>
<dbReference type="InterPro" id="IPR019371">
    <property type="entry name" value="KxDL_dom"/>
</dbReference>
<dbReference type="PANTHER" id="PTHR13511">
    <property type="entry name" value="KXDL MOTIF-CONTAINING PROTEIN 1"/>
    <property type="match status" value="1"/>
</dbReference>
<dbReference type="PANTHER" id="PTHR13511:SF0">
    <property type="entry name" value="KXDL MOTIF-CONTAINING PROTEIN 1"/>
    <property type="match status" value="1"/>
</dbReference>
<dbReference type="Pfam" id="PF10241">
    <property type="entry name" value="KxDL"/>
    <property type="match status" value="1"/>
</dbReference>
<organism>
    <name type="scientific">Xenopus laevis</name>
    <name type="common">African clawed frog</name>
    <dbReference type="NCBI Taxonomy" id="8355"/>
    <lineage>
        <taxon>Eukaryota</taxon>
        <taxon>Metazoa</taxon>
        <taxon>Chordata</taxon>
        <taxon>Craniata</taxon>
        <taxon>Vertebrata</taxon>
        <taxon>Euteleostomi</taxon>
        <taxon>Amphibia</taxon>
        <taxon>Batrachia</taxon>
        <taxon>Anura</taxon>
        <taxon>Pipoidea</taxon>
        <taxon>Pipidae</taxon>
        <taxon>Xenopodinae</taxon>
        <taxon>Xenopus</taxon>
        <taxon>Xenopus</taxon>
    </lineage>
</organism>
<keyword id="KW-0458">Lysosome</keyword>
<keyword id="KW-0472">Membrane</keyword>
<keyword id="KW-1185">Reference proteome</keyword>
<accession>Q6DDT0</accession>
<evidence type="ECO:0000250" key="1">
    <source>
        <dbReference type="UniProtKB" id="Q80XH1"/>
    </source>
</evidence>
<evidence type="ECO:0000250" key="2">
    <source>
        <dbReference type="UniProtKB" id="Q9BQD3"/>
    </source>
</evidence>
<evidence type="ECO:0000256" key="3">
    <source>
        <dbReference type="SAM" id="MobiDB-lite"/>
    </source>
</evidence>
<evidence type="ECO:0000305" key="4"/>
<sequence>MAEQVTEATASGVFCSRILNMVNTGDVNAIILAQRHMLDRFEKTNEMLLNFNGLSNVRLQQMSDRFAHHTRTLVEMKKDLDIIFRRIRMLKGKLAKQYPESFNNVHESPILEDDDDFDPTLKSAATTIATSEQSTESCDTSPSIISPAMSQDFEDLSQAPSDTPSVNGQILTDEELVHED</sequence>
<gene>
    <name type="primary">kxd1</name>
</gene>
<protein>
    <recommendedName>
        <fullName>KxDL motif-containing protein 1</fullName>
    </recommendedName>
</protein>